<name>FRA15_FRAAN</name>
<protein>
    <recommendedName>
        <fullName evidence="4">Major strawberry allergen Fra a 1.05</fullName>
    </recommendedName>
    <alternativeName>
        <fullName evidence="4">Class 10 plant pathogenesis-related protein Fra a 1.05</fullName>
        <shortName evidence="4">PR10-related protein Fra a 1.05</shortName>
        <ecNumber evidence="2">3.1.27.-</ecNumber>
    </alternativeName>
    <allergenName evidence="4">Fra a 1</allergenName>
</protein>
<keyword id="KW-0020">Allergen</keyword>
<keyword id="KW-0378">Hydrolase</keyword>
<keyword id="KW-0540">Nuclease</keyword>
<keyword id="KW-0568">Pathogenesis-related protein</keyword>
<keyword id="KW-0597">Phosphoprotein</keyword>
<keyword id="KW-0611">Plant defense</keyword>
<feature type="chain" id="PRO_0000447016" description="Major strawberry allergen Fra a 1.05">
    <location>
        <begin position="1"/>
        <end position="160"/>
    </location>
</feature>
<reference key="1">
    <citation type="journal article" date="2016" name="J. Agric. Food Chem.">
        <title>Fra a 1.02 is the most potent isoform of the Bet v 1-like allergen in strawberry fruit.</title>
        <authorList>
            <person name="Franz-Oberdorf K."/>
            <person name="Eberlein B."/>
            <person name="Edelmann K."/>
            <person name="Huecherig S."/>
            <person name="Besbes F."/>
            <person name="Darsow U."/>
            <person name="Ring J."/>
            <person name="Schwab W."/>
        </authorList>
    </citation>
    <scope>NUCLEOTIDE SEQUENCE [MRNA]</scope>
</reference>
<reference key="2">
    <citation type="journal article" date="2019" name="J. Plant Physiol.">
        <title>Phosphorylation-dependent ribonuclease activity of Fra a 1 proteins.</title>
        <authorList>
            <person name="Besbes F."/>
            <person name="Franz-Oberdorf K."/>
            <person name="Schwab W."/>
        </authorList>
    </citation>
    <scope>FUNCTION</scope>
    <scope>PHOSPHORYLATION</scope>
</reference>
<sequence>MGVFTYETEFTSVIPPPRLFKAFILDADNLIPKIAPQAVKCAEIIEGDGGVGTIKKITFGEGSQFGSVTHKIDGIDKDNFVYSYSLVEGDALSDKIEKISYETKLVASSDGGSIIKSTSNYHTKGDVEIKEEHVKAGKEKASHLFKLVEGYLLANPNEYC</sequence>
<comment type="function">
    <text evidence="2">Possesses ribonuclease activity in vitro.</text>
</comment>
<comment type="PTM">
    <text evidence="2">Phosphorylated in vivo. Phosphorylation prevents its activity as ribonuclease.</text>
</comment>
<comment type="allergen">
    <text evidence="1">May cause an allergic reaction in human.</text>
</comment>
<comment type="similarity">
    <text evidence="4">Belongs to the BetVI family.</text>
</comment>
<proteinExistence type="evidence at protein level"/>
<evidence type="ECO:0000250" key="1">
    <source>
        <dbReference type="UniProtKB" id="A0A024B3G5"/>
    </source>
</evidence>
<evidence type="ECO:0000269" key="2">
    <source>
    </source>
</evidence>
<evidence type="ECO:0000303" key="3">
    <source>
    </source>
</evidence>
<evidence type="ECO:0000305" key="4"/>
<dbReference type="EC" id="3.1.27.-" evidence="2"/>
<dbReference type="EMBL" id="KJ507736">
    <property type="protein sequence ID" value="AHZ10956.1"/>
    <property type="molecule type" value="mRNA"/>
</dbReference>
<dbReference type="SMR" id="A0A024B404"/>
<dbReference type="GO" id="GO:0005737">
    <property type="term" value="C:cytoplasm"/>
    <property type="evidence" value="ECO:0007669"/>
    <property type="project" value="TreeGrafter"/>
</dbReference>
<dbReference type="GO" id="GO:0005634">
    <property type="term" value="C:nucleus"/>
    <property type="evidence" value="ECO:0007669"/>
    <property type="project" value="TreeGrafter"/>
</dbReference>
<dbReference type="GO" id="GO:0010427">
    <property type="term" value="F:abscisic acid binding"/>
    <property type="evidence" value="ECO:0007669"/>
    <property type="project" value="InterPro"/>
</dbReference>
<dbReference type="GO" id="GO:0004518">
    <property type="term" value="F:nuclease activity"/>
    <property type="evidence" value="ECO:0007669"/>
    <property type="project" value="UniProtKB-KW"/>
</dbReference>
<dbReference type="GO" id="GO:0004864">
    <property type="term" value="F:protein phosphatase inhibitor activity"/>
    <property type="evidence" value="ECO:0007669"/>
    <property type="project" value="InterPro"/>
</dbReference>
<dbReference type="GO" id="GO:0038023">
    <property type="term" value="F:signaling receptor activity"/>
    <property type="evidence" value="ECO:0007669"/>
    <property type="project" value="InterPro"/>
</dbReference>
<dbReference type="GO" id="GO:0009738">
    <property type="term" value="P:abscisic acid-activated signaling pathway"/>
    <property type="evidence" value="ECO:0007669"/>
    <property type="project" value="InterPro"/>
</dbReference>
<dbReference type="GO" id="GO:0006952">
    <property type="term" value="P:defense response"/>
    <property type="evidence" value="ECO:0007669"/>
    <property type="project" value="UniProtKB-KW"/>
</dbReference>
<dbReference type="CDD" id="cd07816">
    <property type="entry name" value="Bet_v1-like"/>
    <property type="match status" value="1"/>
</dbReference>
<dbReference type="FunFam" id="3.30.530.20:FF:000007">
    <property type="entry name" value="Major pollen allergen Bet v 1-A"/>
    <property type="match status" value="1"/>
</dbReference>
<dbReference type="Gene3D" id="3.30.530.20">
    <property type="match status" value="1"/>
</dbReference>
<dbReference type="InterPro" id="IPR000916">
    <property type="entry name" value="Bet_v_I/MLP"/>
</dbReference>
<dbReference type="InterPro" id="IPR024949">
    <property type="entry name" value="Bet_v_I_allergen"/>
</dbReference>
<dbReference type="InterPro" id="IPR050279">
    <property type="entry name" value="Plant_def-hormone_signal"/>
</dbReference>
<dbReference type="InterPro" id="IPR023393">
    <property type="entry name" value="START-like_dom_sf"/>
</dbReference>
<dbReference type="PANTHER" id="PTHR31213">
    <property type="entry name" value="OS08G0374000 PROTEIN-RELATED"/>
    <property type="match status" value="1"/>
</dbReference>
<dbReference type="PANTHER" id="PTHR31213:SF55">
    <property type="entry name" value="STRESS-INDUCED PROTEIN SAM22"/>
    <property type="match status" value="1"/>
</dbReference>
<dbReference type="Pfam" id="PF00407">
    <property type="entry name" value="Bet_v_1"/>
    <property type="match status" value="1"/>
</dbReference>
<dbReference type="PRINTS" id="PR00634">
    <property type="entry name" value="BETALLERGEN"/>
</dbReference>
<dbReference type="SUPFAM" id="SSF55961">
    <property type="entry name" value="Bet v1-like"/>
    <property type="match status" value="1"/>
</dbReference>
<dbReference type="PROSITE" id="PS00451">
    <property type="entry name" value="PATHOGENESIS_BETVI"/>
    <property type="match status" value="1"/>
</dbReference>
<organism>
    <name type="scientific">Fragaria ananassa</name>
    <name type="common">Strawberry</name>
    <name type="synonym">Fragaria chiloensis x Fragaria virginiana</name>
    <dbReference type="NCBI Taxonomy" id="3747"/>
    <lineage>
        <taxon>Eukaryota</taxon>
        <taxon>Viridiplantae</taxon>
        <taxon>Streptophyta</taxon>
        <taxon>Embryophyta</taxon>
        <taxon>Tracheophyta</taxon>
        <taxon>Spermatophyta</taxon>
        <taxon>Magnoliopsida</taxon>
        <taxon>eudicotyledons</taxon>
        <taxon>Gunneridae</taxon>
        <taxon>Pentapetalae</taxon>
        <taxon>rosids</taxon>
        <taxon>fabids</taxon>
        <taxon>Rosales</taxon>
        <taxon>Rosaceae</taxon>
        <taxon>Rosoideae</taxon>
        <taxon>Potentilleae</taxon>
        <taxon>Fragariinae</taxon>
        <taxon>Fragaria</taxon>
    </lineage>
</organism>
<accession>A0A024B404</accession>
<gene>
    <name evidence="3" type="primary">Fra a 1.05</name>
</gene>